<gene>
    <name type="primary">RPS24</name>
    <name type="synonym">RPS19</name>
</gene>
<keyword id="KW-0007">Acetylation</keyword>
<keyword id="KW-0963">Cytoplasm</keyword>
<keyword id="KW-1017">Isopeptide bond</keyword>
<keyword id="KW-0597">Phosphoprotein</keyword>
<keyword id="KW-1185">Reference proteome</keyword>
<keyword id="KW-0687">Ribonucleoprotein</keyword>
<keyword id="KW-0689">Ribosomal protein</keyword>
<keyword id="KW-0832">Ubl conjugation</keyword>
<feature type="chain" id="PRO_0000137624" description="Small ribosomal subunit protein eS24">
    <location>
        <begin position="1"/>
        <end position="133"/>
    </location>
</feature>
<feature type="region of interest" description="Disordered" evidence="2">
    <location>
        <begin position="92"/>
        <end position="133"/>
    </location>
</feature>
<feature type="compositionally biased region" description="Basic residues" evidence="2">
    <location>
        <begin position="101"/>
        <end position="119"/>
    </location>
</feature>
<feature type="modified residue" description="N-acetylmethionine" evidence="1">
    <location>
        <position position="1"/>
    </location>
</feature>
<feature type="modified residue" description="Phosphothreonine" evidence="1">
    <location>
        <position position="9"/>
    </location>
</feature>
<feature type="cross-link" description="Glycyl lysine isopeptide (Lys-Gly) (interchain with G-Cter in SUMO2)" evidence="1">
    <location>
        <position position="37"/>
    </location>
</feature>
<organism>
    <name type="scientific">Mesocricetus auratus</name>
    <name type="common">Golden hamster</name>
    <dbReference type="NCBI Taxonomy" id="10036"/>
    <lineage>
        <taxon>Eukaryota</taxon>
        <taxon>Metazoa</taxon>
        <taxon>Chordata</taxon>
        <taxon>Craniata</taxon>
        <taxon>Vertebrata</taxon>
        <taxon>Euteleostomi</taxon>
        <taxon>Mammalia</taxon>
        <taxon>Eutheria</taxon>
        <taxon>Euarchontoglires</taxon>
        <taxon>Glires</taxon>
        <taxon>Rodentia</taxon>
        <taxon>Myomorpha</taxon>
        <taxon>Muroidea</taxon>
        <taxon>Cricetidae</taxon>
        <taxon>Cricetinae</taxon>
        <taxon>Mesocricetus</taxon>
    </lineage>
</organism>
<dbReference type="EMBL" id="X52658">
    <property type="protein sequence ID" value="CAA36884.1"/>
    <property type="molecule type" value="Genomic_DNA"/>
</dbReference>
<dbReference type="PIR" id="S10325">
    <property type="entry name" value="R3HY24"/>
</dbReference>
<dbReference type="SMR" id="P62848"/>
<dbReference type="STRING" id="10036.ENSMAUP00000002510"/>
<dbReference type="eggNOG" id="KOG3424">
    <property type="taxonomic scope" value="Eukaryota"/>
</dbReference>
<dbReference type="Proteomes" id="UP000189706">
    <property type="component" value="Unplaced"/>
</dbReference>
<dbReference type="GO" id="GO:0022626">
    <property type="term" value="C:cytosolic ribosome"/>
    <property type="evidence" value="ECO:0007669"/>
    <property type="project" value="UniProtKB-ARBA"/>
</dbReference>
<dbReference type="GO" id="GO:0015935">
    <property type="term" value="C:small ribosomal subunit"/>
    <property type="evidence" value="ECO:0000250"/>
    <property type="project" value="UniProtKB"/>
</dbReference>
<dbReference type="GO" id="GO:0003735">
    <property type="term" value="F:structural constituent of ribosome"/>
    <property type="evidence" value="ECO:0007669"/>
    <property type="project" value="InterPro"/>
</dbReference>
<dbReference type="GO" id="GO:0006412">
    <property type="term" value="P:translation"/>
    <property type="evidence" value="ECO:0007669"/>
    <property type="project" value="InterPro"/>
</dbReference>
<dbReference type="FunFam" id="3.30.70.3370:FF:000001">
    <property type="entry name" value="40S ribosomal protein S24"/>
    <property type="match status" value="1"/>
</dbReference>
<dbReference type="Gene3D" id="3.30.70.3370">
    <property type="match status" value="1"/>
</dbReference>
<dbReference type="HAMAP" id="MF_00545">
    <property type="entry name" value="Ribosomal_eS24"/>
    <property type="match status" value="1"/>
</dbReference>
<dbReference type="InterPro" id="IPR053709">
    <property type="entry name" value="eRP_eS24_sf"/>
</dbReference>
<dbReference type="InterPro" id="IPR001976">
    <property type="entry name" value="Ribosomal_eS24"/>
</dbReference>
<dbReference type="InterPro" id="IPR018098">
    <property type="entry name" value="Ribosomal_eS24_CS"/>
</dbReference>
<dbReference type="InterPro" id="IPR012678">
    <property type="entry name" value="Ribosomal_uL23/eL15/eS24_sf"/>
</dbReference>
<dbReference type="PANTHER" id="PTHR10496">
    <property type="entry name" value="40S RIBOSOMAL PROTEIN S24"/>
    <property type="match status" value="1"/>
</dbReference>
<dbReference type="Pfam" id="PF01282">
    <property type="entry name" value="Ribosomal_S24e"/>
    <property type="match status" value="1"/>
</dbReference>
<dbReference type="SUPFAM" id="SSF54189">
    <property type="entry name" value="Ribosomal proteins S24e, L23 and L15e"/>
    <property type="match status" value="1"/>
</dbReference>
<dbReference type="PROSITE" id="PS00529">
    <property type="entry name" value="RIBOSOMAL_S24E"/>
    <property type="match status" value="1"/>
</dbReference>
<protein>
    <recommendedName>
        <fullName evidence="3">Small ribosomal subunit protein eS24</fullName>
    </recommendedName>
    <alternativeName>
        <fullName>40S ribosomal protein S24</fullName>
    </alternativeName>
    <alternativeName>
        <fullName>Ribosomal protein S19</fullName>
    </alternativeName>
</protein>
<name>RS24_MESAU</name>
<comment type="function">
    <text evidence="1">Component of the small ribosomal subunit. The ribosome is a large ribonucleoprotein complex responsible for the synthesis of proteins in the cell. Required for processing of pre-rRNA and maturation of 40S ribosomal subunits.</text>
</comment>
<comment type="subunit">
    <text evidence="1">Component of the small ribosomal subunit.</text>
</comment>
<comment type="subcellular location">
    <subcellularLocation>
        <location evidence="1">Cytoplasm</location>
    </subcellularLocation>
</comment>
<comment type="similarity">
    <text evidence="3">Belongs to the eukaryotic ribosomal protein eS24 family.</text>
</comment>
<reference key="1">
    <citation type="journal article" date="1990" name="Nucleic Acids Res.">
        <title>Nucleotide sequence of a hamster cDNA highly homologous to the Xenopus laevis S19 ribosomal protein.</title>
        <authorList>
            <person name="Klein H."/>
            <person name="Gervais C."/>
            <person name="Suh M."/>
        </authorList>
    </citation>
    <scope>NUCLEOTIDE SEQUENCE [GENOMIC DNA]</scope>
    <source>
        <strain>LVG</strain>
    </source>
</reference>
<accession>P62848</accession>
<accession>P16632</accession>
<proteinExistence type="inferred from homology"/>
<sequence length="133" mass="15423">MNDTVTIRTRKFMTNRLLQRKQMVIDVLHPGKATVPKTEIREKLAKMYKTTPDVIFVFGFRTHFGGGKTTGFGMIYDSLDYAKKNEPKHRLARHGLYEKKKTSRKQRKERKNRMKKVRGTAKANVGAGKKPKE</sequence>
<evidence type="ECO:0000250" key="1">
    <source>
        <dbReference type="UniProtKB" id="P62847"/>
    </source>
</evidence>
<evidence type="ECO:0000256" key="2">
    <source>
        <dbReference type="SAM" id="MobiDB-lite"/>
    </source>
</evidence>
<evidence type="ECO:0000305" key="3"/>